<comment type="function">
    <text evidence="1">May be a guanine nucleotide exchange factor (GEF).</text>
</comment>
<comment type="subcellular location">
    <subcellularLocation>
        <location evidence="1">Late endosome</location>
    </subcellularLocation>
</comment>
<comment type="similarity">
    <text evidence="3">Belongs to the DENND10 family.</text>
</comment>
<comment type="caution">
    <text evidence="3">Could be the product of a pseudogene.</text>
</comment>
<comment type="sequence caution" evidence="3">
    <conflict type="frameshift">
        <sequence resource="EMBL-CDS" id="AAF67650"/>
    </conflict>
</comment>
<gene>
    <name evidence="4" type="primary">DENND10P1</name>
    <name type="synonym">FAM45</name>
    <name evidence="4" type="synonym">FAM45BP</name>
    <name type="ORF">HT011</name>
</gene>
<dbReference type="EMBL" id="AF220185">
    <property type="protein sequence ID" value="AAF67650.1"/>
    <property type="status" value="ALT_FRAME"/>
    <property type="molecule type" value="mRNA"/>
</dbReference>
<dbReference type="EMBL" id="Z82195">
    <property type="status" value="NOT_ANNOTATED_CDS"/>
    <property type="molecule type" value="Genomic_DNA"/>
</dbReference>
<dbReference type="EMBL" id="CH471107">
    <property type="protein sequence ID" value="EAX11798.1"/>
    <property type="molecule type" value="Genomic_DNA"/>
</dbReference>
<dbReference type="EMBL" id="BC069821">
    <property type="status" value="NOT_ANNOTATED_CDS"/>
    <property type="molecule type" value="mRNA"/>
</dbReference>
<dbReference type="SMR" id="Q6NSW5"/>
<dbReference type="FunCoup" id="Q6NSW5">
    <property type="interactions" value="156"/>
</dbReference>
<dbReference type="IntAct" id="Q6NSW5">
    <property type="interactions" value="1"/>
</dbReference>
<dbReference type="GlyGen" id="Q6NSW5">
    <property type="glycosylation" value="1 site, 1 O-linked glycan (1 site)"/>
</dbReference>
<dbReference type="iPTMnet" id="Q6NSW5"/>
<dbReference type="PhosphoSitePlus" id="Q6NSW5"/>
<dbReference type="BioMuta" id="HGNC:30886"/>
<dbReference type="jPOST" id="Q6NSW5"/>
<dbReference type="MassIVE" id="Q6NSW5"/>
<dbReference type="PeptideAtlas" id="Q6NSW5"/>
<dbReference type="ProteomicsDB" id="66642"/>
<dbReference type="Pumba" id="Q6NSW5"/>
<dbReference type="AGR" id="HGNC:30886"/>
<dbReference type="GeneCards" id="DENND10P1"/>
<dbReference type="HGNC" id="HGNC:30886">
    <property type="gene designation" value="DENND10P1"/>
</dbReference>
<dbReference type="neXtProt" id="NX_Q6NSW5"/>
<dbReference type="InParanoid" id="Q6NSW5"/>
<dbReference type="PAN-GO" id="Q6NSW5">
    <property type="GO annotations" value="5 GO annotations based on evolutionary models"/>
</dbReference>
<dbReference type="PhylomeDB" id="Q6NSW5"/>
<dbReference type="PathwayCommons" id="Q6NSW5"/>
<dbReference type="SignaLink" id="Q6NSW5"/>
<dbReference type="Pharos" id="Q6NSW5">
    <property type="development level" value="Tdark"/>
</dbReference>
<dbReference type="PRO" id="PR:Q6NSW5"/>
<dbReference type="Proteomes" id="UP000005640">
    <property type="component" value="Unplaced"/>
</dbReference>
<dbReference type="RNAct" id="Q6NSW5">
    <property type="molecule type" value="protein"/>
</dbReference>
<dbReference type="GO" id="GO:0005770">
    <property type="term" value="C:late endosome"/>
    <property type="evidence" value="ECO:0000318"/>
    <property type="project" value="GO_Central"/>
</dbReference>
<dbReference type="GO" id="GO:0005085">
    <property type="term" value="F:guanyl-nucleotide exchange factor activity"/>
    <property type="evidence" value="ECO:0000318"/>
    <property type="project" value="GO_Central"/>
</dbReference>
<dbReference type="GO" id="GO:0031267">
    <property type="term" value="F:small GTPase binding"/>
    <property type="evidence" value="ECO:0000318"/>
    <property type="project" value="GO_Central"/>
</dbReference>
<dbReference type="GO" id="GO:0015031">
    <property type="term" value="P:protein transport"/>
    <property type="evidence" value="ECO:0000318"/>
    <property type="project" value="GO_Central"/>
</dbReference>
<dbReference type="GO" id="GO:2000641">
    <property type="term" value="P:regulation of early endosome to late endosome transport"/>
    <property type="evidence" value="ECO:0000318"/>
    <property type="project" value="GO_Central"/>
</dbReference>
<dbReference type="InterPro" id="IPR042431">
    <property type="entry name" value="FAM45"/>
</dbReference>
<dbReference type="InterPro" id="IPR037516">
    <property type="entry name" value="Tripartite_DENN"/>
</dbReference>
<dbReference type="PANTHER" id="PTHR28544:SF1">
    <property type="entry name" value="DENN DOMAIN-CONTAINING PROTEIN 10-RELATED"/>
    <property type="match status" value="1"/>
</dbReference>
<dbReference type="PANTHER" id="PTHR28544">
    <property type="entry name" value="PROTEIN FAM45A-RELATED"/>
    <property type="match status" value="1"/>
</dbReference>
<dbReference type="Pfam" id="PF08616">
    <property type="entry name" value="SPA"/>
    <property type="match status" value="1"/>
</dbReference>
<dbReference type="PROSITE" id="PS50211">
    <property type="entry name" value="DENN"/>
    <property type="match status" value="1"/>
</dbReference>
<organism>
    <name type="scientific">Homo sapiens</name>
    <name type="common">Human</name>
    <dbReference type="NCBI Taxonomy" id="9606"/>
    <lineage>
        <taxon>Eukaryota</taxon>
        <taxon>Metazoa</taxon>
        <taxon>Chordata</taxon>
        <taxon>Craniata</taxon>
        <taxon>Vertebrata</taxon>
        <taxon>Euteleostomi</taxon>
        <taxon>Mammalia</taxon>
        <taxon>Eutheria</taxon>
        <taxon>Euarchontoglires</taxon>
        <taxon>Primates</taxon>
        <taxon>Haplorrhini</taxon>
        <taxon>Catarrhini</taxon>
        <taxon>Hominidae</taxon>
        <taxon>Homo</taxon>
    </lineage>
</organism>
<protein>
    <recommendedName>
        <fullName evidence="3">Putative DENN domain-containing protein 10 B</fullName>
    </recommendedName>
    <alternativeName>
        <fullName evidence="4">DENND10 pseudogene 1</fullName>
    </alternativeName>
    <alternativeName>
        <fullName>Putative protein FAM45B</fullName>
    </alternativeName>
</protein>
<reference key="1">
    <citation type="journal article" date="2000" name="Proc. Natl. Acad. Sci. U.S.A.">
        <title>Gene expression profiling in the human hypothalamus-pituitary-adrenal axis and full-length cDNA cloning.</title>
        <authorList>
            <person name="Hu R.-M."/>
            <person name="Han Z.-G."/>
            <person name="Song H.-D."/>
            <person name="Peng Y.-D."/>
            <person name="Huang Q.-H."/>
            <person name="Ren S.-X."/>
            <person name="Gu Y.-J."/>
            <person name="Huang C.-H."/>
            <person name="Li Y.-B."/>
            <person name="Jiang C.-L."/>
            <person name="Fu G."/>
            <person name="Zhang Q.-H."/>
            <person name="Gu B.-W."/>
            <person name="Dai M."/>
            <person name="Mao Y.-F."/>
            <person name="Gao G.-F."/>
            <person name="Rong R."/>
            <person name="Ye M."/>
            <person name="Zhou J."/>
            <person name="Xu S.-H."/>
            <person name="Gu J."/>
            <person name="Shi J.-X."/>
            <person name="Jin W.-R."/>
            <person name="Zhang C.-K."/>
            <person name="Wu T.-M."/>
            <person name="Huang G.-Y."/>
            <person name="Chen Z."/>
            <person name="Chen M.-D."/>
            <person name="Chen J.-L."/>
        </authorList>
    </citation>
    <scope>NUCLEOTIDE SEQUENCE [LARGE SCALE MRNA]</scope>
    <source>
        <tissue>Hypothalamus</tissue>
    </source>
</reference>
<reference key="2">
    <citation type="journal article" date="2005" name="Nature">
        <title>The DNA sequence of the human X chromosome.</title>
        <authorList>
            <person name="Ross M.T."/>
            <person name="Grafham D.V."/>
            <person name="Coffey A.J."/>
            <person name="Scherer S."/>
            <person name="McLay K."/>
            <person name="Muzny D."/>
            <person name="Platzer M."/>
            <person name="Howell G.R."/>
            <person name="Burrows C."/>
            <person name="Bird C.P."/>
            <person name="Frankish A."/>
            <person name="Lovell F.L."/>
            <person name="Howe K.L."/>
            <person name="Ashurst J.L."/>
            <person name="Fulton R.S."/>
            <person name="Sudbrak R."/>
            <person name="Wen G."/>
            <person name="Jones M.C."/>
            <person name="Hurles M.E."/>
            <person name="Andrews T.D."/>
            <person name="Scott C.E."/>
            <person name="Searle S."/>
            <person name="Ramser J."/>
            <person name="Whittaker A."/>
            <person name="Deadman R."/>
            <person name="Carter N.P."/>
            <person name="Hunt S.E."/>
            <person name="Chen R."/>
            <person name="Cree A."/>
            <person name="Gunaratne P."/>
            <person name="Havlak P."/>
            <person name="Hodgson A."/>
            <person name="Metzker M.L."/>
            <person name="Richards S."/>
            <person name="Scott G."/>
            <person name="Steffen D."/>
            <person name="Sodergren E."/>
            <person name="Wheeler D.A."/>
            <person name="Worley K.C."/>
            <person name="Ainscough R."/>
            <person name="Ambrose K.D."/>
            <person name="Ansari-Lari M.A."/>
            <person name="Aradhya S."/>
            <person name="Ashwell R.I."/>
            <person name="Babbage A.K."/>
            <person name="Bagguley C.L."/>
            <person name="Ballabio A."/>
            <person name="Banerjee R."/>
            <person name="Barker G.E."/>
            <person name="Barlow K.F."/>
            <person name="Barrett I.P."/>
            <person name="Bates K.N."/>
            <person name="Beare D.M."/>
            <person name="Beasley H."/>
            <person name="Beasley O."/>
            <person name="Beck A."/>
            <person name="Bethel G."/>
            <person name="Blechschmidt K."/>
            <person name="Brady N."/>
            <person name="Bray-Allen S."/>
            <person name="Bridgeman A.M."/>
            <person name="Brown A.J."/>
            <person name="Brown M.J."/>
            <person name="Bonnin D."/>
            <person name="Bruford E.A."/>
            <person name="Buhay C."/>
            <person name="Burch P."/>
            <person name="Burford D."/>
            <person name="Burgess J."/>
            <person name="Burrill W."/>
            <person name="Burton J."/>
            <person name="Bye J.M."/>
            <person name="Carder C."/>
            <person name="Carrel L."/>
            <person name="Chako J."/>
            <person name="Chapman J.C."/>
            <person name="Chavez D."/>
            <person name="Chen E."/>
            <person name="Chen G."/>
            <person name="Chen Y."/>
            <person name="Chen Z."/>
            <person name="Chinault C."/>
            <person name="Ciccodicola A."/>
            <person name="Clark S.Y."/>
            <person name="Clarke G."/>
            <person name="Clee C.M."/>
            <person name="Clegg S."/>
            <person name="Clerc-Blankenburg K."/>
            <person name="Clifford K."/>
            <person name="Cobley V."/>
            <person name="Cole C.G."/>
            <person name="Conquer J.S."/>
            <person name="Corby N."/>
            <person name="Connor R.E."/>
            <person name="David R."/>
            <person name="Davies J."/>
            <person name="Davis C."/>
            <person name="Davis J."/>
            <person name="Delgado O."/>
            <person name="Deshazo D."/>
            <person name="Dhami P."/>
            <person name="Ding Y."/>
            <person name="Dinh H."/>
            <person name="Dodsworth S."/>
            <person name="Draper H."/>
            <person name="Dugan-Rocha S."/>
            <person name="Dunham A."/>
            <person name="Dunn M."/>
            <person name="Durbin K.J."/>
            <person name="Dutta I."/>
            <person name="Eades T."/>
            <person name="Ellwood M."/>
            <person name="Emery-Cohen A."/>
            <person name="Errington H."/>
            <person name="Evans K.L."/>
            <person name="Faulkner L."/>
            <person name="Francis F."/>
            <person name="Frankland J."/>
            <person name="Fraser A.E."/>
            <person name="Galgoczy P."/>
            <person name="Gilbert J."/>
            <person name="Gill R."/>
            <person name="Gloeckner G."/>
            <person name="Gregory S.G."/>
            <person name="Gribble S."/>
            <person name="Griffiths C."/>
            <person name="Grocock R."/>
            <person name="Gu Y."/>
            <person name="Gwilliam R."/>
            <person name="Hamilton C."/>
            <person name="Hart E.A."/>
            <person name="Hawes A."/>
            <person name="Heath P.D."/>
            <person name="Heitmann K."/>
            <person name="Hennig S."/>
            <person name="Hernandez J."/>
            <person name="Hinzmann B."/>
            <person name="Ho S."/>
            <person name="Hoffs M."/>
            <person name="Howden P.J."/>
            <person name="Huckle E.J."/>
            <person name="Hume J."/>
            <person name="Hunt P.J."/>
            <person name="Hunt A.R."/>
            <person name="Isherwood J."/>
            <person name="Jacob L."/>
            <person name="Johnson D."/>
            <person name="Jones S."/>
            <person name="de Jong P.J."/>
            <person name="Joseph S.S."/>
            <person name="Keenan S."/>
            <person name="Kelly S."/>
            <person name="Kershaw J.K."/>
            <person name="Khan Z."/>
            <person name="Kioschis P."/>
            <person name="Klages S."/>
            <person name="Knights A.J."/>
            <person name="Kosiura A."/>
            <person name="Kovar-Smith C."/>
            <person name="Laird G.K."/>
            <person name="Langford C."/>
            <person name="Lawlor S."/>
            <person name="Leversha M."/>
            <person name="Lewis L."/>
            <person name="Liu W."/>
            <person name="Lloyd C."/>
            <person name="Lloyd D.M."/>
            <person name="Loulseged H."/>
            <person name="Loveland J.E."/>
            <person name="Lovell J.D."/>
            <person name="Lozado R."/>
            <person name="Lu J."/>
            <person name="Lyne R."/>
            <person name="Ma J."/>
            <person name="Maheshwari M."/>
            <person name="Matthews L.H."/>
            <person name="McDowall J."/>
            <person name="McLaren S."/>
            <person name="McMurray A."/>
            <person name="Meidl P."/>
            <person name="Meitinger T."/>
            <person name="Milne S."/>
            <person name="Miner G."/>
            <person name="Mistry S.L."/>
            <person name="Morgan M."/>
            <person name="Morris S."/>
            <person name="Mueller I."/>
            <person name="Mullikin J.C."/>
            <person name="Nguyen N."/>
            <person name="Nordsiek G."/>
            <person name="Nyakatura G."/>
            <person name="O'dell C.N."/>
            <person name="Okwuonu G."/>
            <person name="Palmer S."/>
            <person name="Pandian R."/>
            <person name="Parker D."/>
            <person name="Parrish J."/>
            <person name="Pasternak S."/>
            <person name="Patel D."/>
            <person name="Pearce A.V."/>
            <person name="Pearson D.M."/>
            <person name="Pelan S.E."/>
            <person name="Perez L."/>
            <person name="Porter K.M."/>
            <person name="Ramsey Y."/>
            <person name="Reichwald K."/>
            <person name="Rhodes S."/>
            <person name="Ridler K.A."/>
            <person name="Schlessinger D."/>
            <person name="Schueler M.G."/>
            <person name="Sehra H.K."/>
            <person name="Shaw-Smith C."/>
            <person name="Shen H."/>
            <person name="Sheridan E.M."/>
            <person name="Shownkeen R."/>
            <person name="Skuce C.D."/>
            <person name="Smith M.L."/>
            <person name="Sotheran E.C."/>
            <person name="Steingruber H.E."/>
            <person name="Steward C.A."/>
            <person name="Storey R."/>
            <person name="Swann R.M."/>
            <person name="Swarbreck D."/>
            <person name="Tabor P.E."/>
            <person name="Taudien S."/>
            <person name="Taylor T."/>
            <person name="Teague B."/>
            <person name="Thomas K."/>
            <person name="Thorpe A."/>
            <person name="Timms K."/>
            <person name="Tracey A."/>
            <person name="Trevanion S."/>
            <person name="Tromans A.C."/>
            <person name="d'Urso M."/>
            <person name="Verduzco D."/>
            <person name="Villasana D."/>
            <person name="Waldron L."/>
            <person name="Wall M."/>
            <person name="Wang Q."/>
            <person name="Warren J."/>
            <person name="Warry G.L."/>
            <person name="Wei X."/>
            <person name="West A."/>
            <person name="Whitehead S.L."/>
            <person name="Whiteley M.N."/>
            <person name="Wilkinson J.E."/>
            <person name="Willey D.L."/>
            <person name="Williams G."/>
            <person name="Williams L."/>
            <person name="Williamson A."/>
            <person name="Williamson H."/>
            <person name="Wilming L."/>
            <person name="Woodmansey R.L."/>
            <person name="Wray P.W."/>
            <person name="Yen J."/>
            <person name="Zhang J."/>
            <person name="Zhou J."/>
            <person name="Zoghbi H."/>
            <person name="Zorilla S."/>
            <person name="Buck D."/>
            <person name="Reinhardt R."/>
            <person name="Poustka A."/>
            <person name="Rosenthal A."/>
            <person name="Lehrach H."/>
            <person name="Meindl A."/>
            <person name="Minx P.J."/>
            <person name="Hillier L.W."/>
            <person name="Willard H.F."/>
            <person name="Wilson R.K."/>
            <person name="Waterston R.H."/>
            <person name="Rice C.M."/>
            <person name="Vaudin M."/>
            <person name="Coulson A."/>
            <person name="Nelson D.L."/>
            <person name="Weinstock G."/>
            <person name="Sulston J.E."/>
            <person name="Durbin R.M."/>
            <person name="Hubbard T."/>
            <person name="Gibbs R.A."/>
            <person name="Beck S."/>
            <person name="Rogers J."/>
            <person name="Bentley D.R."/>
        </authorList>
    </citation>
    <scope>NUCLEOTIDE SEQUENCE [LARGE SCALE GENOMIC DNA]</scope>
</reference>
<reference key="3">
    <citation type="submission" date="2005-09" db="EMBL/GenBank/DDBJ databases">
        <authorList>
            <person name="Mural R.J."/>
            <person name="Istrail S."/>
            <person name="Sutton G.G."/>
            <person name="Florea L."/>
            <person name="Halpern A.L."/>
            <person name="Mobarry C.M."/>
            <person name="Lippert R."/>
            <person name="Walenz B."/>
            <person name="Shatkay H."/>
            <person name="Dew I."/>
            <person name="Miller J.R."/>
            <person name="Flanigan M.J."/>
            <person name="Edwards N.J."/>
            <person name="Bolanos R."/>
            <person name="Fasulo D."/>
            <person name="Halldorsson B.V."/>
            <person name="Hannenhalli S."/>
            <person name="Turner R."/>
            <person name="Yooseph S."/>
            <person name="Lu F."/>
            <person name="Nusskern D.R."/>
            <person name="Shue B.C."/>
            <person name="Zheng X.H."/>
            <person name="Zhong F."/>
            <person name="Delcher A.L."/>
            <person name="Huson D.H."/>
            <person name="Kravitz S.A."/>
            <person name="Mouchard L."/>
            <person name="Reinert K."/>
            <person name="Remington K.A."/>
            <person name="Clark A.G."/>
            <person name="Waterman M.S."/>
            <person name="Eichler E.E."/>
            <person name="Adams M.D."/>
            <person name="Hunkapiller M.W."/>
            <person name="Myers E.W."/>
            <person name="Venter J.C."/>
        </authorList>
    </citation>
    <scope>NUCLEOTIDE SEQUENCE [LARGE SCALE GENOMIC DNA]</scope>
</reference>
<reference key="4">
    <citation type="journal article" date="2004" name="Genome Res.">
        <title>The status, quality, and expansion of the NIH full-length cDNA project: the Mammalian Gene Collection (MGC).</title>
        <authorList>
            <consortium name="The MGC Project Team"/>
        </authorList>
    </citation>
    <scope>NUCLEOTIDE SEQUENCE [LARGE SCALE MRNA]</scope>
</reference>
<sequence length="357" mass="40514">MAAAELADTQLMLGVGLIEKDTNGEVLWVWCYPSTTATLRNLLLRKCCLTDENKLLHPFVFGQYRRTWFYITIIEVPDSSILKKVTHFSIVLTAKDFNPEKYAAFTRILCRMYLKHGSPVKMMESYIAVLTKGICQSEENGSFLSKDFDARKAYPAGSIKDIVSQFGMETVILHTALMLKKRIVVYHPKIEAVQEFTRTLPALVWHRQDWTILHSYVHLNADELEALQMCTGYVAGFVDLEVSNRPDLYDVFVNLAESEITIAPLAKEAMAMGKLHKEMGQLIVQSAEDPEKSESQVIQDIALKTREIFTNLAPFSEVSADGEKRVLNLEALKQKRFPPATENFLYHLAAAEQMLKI</sequence>
<name>DE10B_HUMAN</name>
<keyword id="KW-0967">Endosome</keyword>
<keyword id="KW-0344">Guanine-nucleotide releasing factor</keyword>
<keyword id="KW-1185">Reference proteome</keyword>
<proteinExistence type="uncertain"/>
<accession>Q6NSW5</accession>
<accession>Q5H9G7</accession>
<accession>Q9NZ36</accession>
<feature type="chain" id="PRO_0000187035" description="Putative DENN domain-containing protein 10 B">
    <location>
        <begin position="1"/>
        <end position="357"/>
    </location>
</feature>
<feature type="domain" description="uDENN" evidence="2">
    <location>
        <begin position="1"/>
        <end position="140"/>
    </location>
</feature>
<feature type="domain" description="cDENN" evidence="2">
    <location>
        <begin position="159"/>
        <end position="299"/>
    </location>
</feature>
<feature type="domain" description="dDENN" evidence="2">
    <location>
        <begin position="301"/>
        <end position="357"/>
    </location>
</feature>
<feature type="sequence conflict" description="In Ref. 1; AAF67650." evidence="3" ref="1">
    <original>Q</original>
    <variation>H</variation>
    <location>
        <position position="296"/>
    </location>
</feature>
<evidence type="ECO:0000250" key="1">
    <source>
        <dbReference type="UniProtKB" id="Q8TCE6"/>
    </source>
</evidence>
<evidence type="ECO:0000255" key="2">
    <source>
        <dbReference type="PROSITE-ProRule" id="PRU00304"/>
    </source>
</evidence>
<evidence type="ECO:0000305" key="3"/>
<evidence type="ECO:0000312" key="4">
    <source>
        <dbReference type="HGNC" id="HGNC:30886"/>
    </source>
</evidence>